<name>RT25_ASPOR</name>
<gene>
    <name type="primary">rsm25</name>
    <name type="ORF">AO090023000850</name>
</gene>
<dbReference type="EMBL" id="BA000051">
    <property type="protein sequence ID" value="BAE59350.1"/>
    <property type="molecule type" value="Genomic_DNA"/>
</dbReference>
<dbReference type="RefSeq" id="XP_001821352.1">
    <property type="nucleotide sequence ID" value="XM_001821300.2"/>
</dbReference>
<dbReference type="SMR" id="Q2UGG5"/>
<dbReference type="STRING" id="510516.Q2UGG5"/>
<dbReference type="EnsemblFungi" id="BAE59350">
    <property type="protein sequence ID" value="BAE59350"/>
    <property type="gene ID" value="AO090023000850"/>
</dbReference>
<dbReference type="GeneID" id="5993354"/>
<dbReference type="KEGG" id="aor:AO090023000850"/>
<dbReference type="VEuPathDB" id="FungiDB:AO090023000850"/>
<dbReference type="HOGENOM" id="CLU_081350_0_0_1"/>
<dbReference type="OMA" id="ENWKIWA"/>
<dbReference type="OrthoDB" id="75864at5052"/>
<dbReference type="Proteomes" id="UP000006564">
    <property type="component" value="Chromosome 3"/>
</dbReference>
<dbReference type="GO" id="GO:0005763">
    <property type="term" value="C:mitochondrial small ribosomal subunit"/>
    <property type="evidence" value="ECO:0007669"/>
    <property type="project" value="InterPro"/>
</dbReference>
<dbReference type="GO" id="GO:0003735">
    <property type="term" value="F:structural constituent of ribosome"/>
    <property type="evidence" value="ECO:0007669"/>
    <property type="project" value="InterPro"/>
</dbReference>
<dbReference type="InterPro" id="IPR016939">
    <property type="entry name" value="Ribosomal_mS23_fun"/>
</dbReference>
<dbReference type="PANTHER" id="PTHR37799">
    <property type="entry name" value="37S RIBOSOMAL PROTEIN S25, MITOCHONDRIAL"/>
    <property type="match status" value="1"/>
</dbReference>
<dbReference type="PANTHER" id="PTHR37799:SF1">
    <property type="entry name" value="SMALL RIBOSOMAL SUBUNIT PROTEIN MS23"/>
    <property type="match status" value="1"/>
</dbReference>
<dbReference type="Pfam" id="PF13741">
    <property type="entry name" value="MRP-S25"/>
    <property type="match status" value="1"/>
</dbReference>
<dbReference type="PIRSF" id="PIRSF029764">
    <property type="entry name" value="RSM25"/>
    <property type="match status" value="1"/>
</dbReference>
<comment type="subunit">
    <text evidence="1">Component of the mitochondrial small ribosomal subunit.</text>
</comment>
<comment type="subcellular location">
    <subcellularLocation>
        <location evidence="1">Mitochondrion</location>
    </subcellularLocation>
</comment>
<comment type="similarity">
    <text evidence="3">Belongs to the mitochondrion-specific ribosomal protein mS23 family.</text>
</comment>
<feature type="chain" id="PRO_0000343544" description="Small ribosomal subunit protein mS23">
    <location>
        <begin position="1"/>
        <end position="261"/>
    </location>
</feature>
<feature type="region of interest" description="Disordered" evidence="2">
    <location>
        <begin position="228"/>
        <end position="261"/>
    </location>
</feature>
<organism>
    <name type="scientific">Aspergillus oryzae (strain ATCC 42149 / RIB 40)</name>
    <name type="common">Yellow koji mold</name>
    <dbReference type="NCBI Taxonomy" id="510516"/>
    <lineage>
        <taxon>Eukaryota</taxon>
        <taxon>Fungi</taxon>
        <taxon>Dikarya</taxon>
        <taxon>Ascomycota</taxon>
        <taxon>Pezizomycotina</taxon>
        <taxon>Eurotiomycetes</taxon>
        <taxon>Eurotiomycetidae</taxon>
        <taxon>Eurotiales</taxon>
        <taxon>Aspergillaceae</taxon>
        <taxon>Aspergillus</taxon>
        <taxon>Aspergillus subgen. Circumdati</taxon>
    </lineage>
</organism>
<accession>Q2UGG5</accession>
<sequence>MGKYNLTALRVRQTALRQKEAGKTHQIPKWIDVVRDIPPAQVLVRNQQQQHQLVRQRLKTLPGASKPQVVFEVQEKRVKPKKASRMFLPTEIKYEEDLLRKEFFRDHPWELARPRVVLESTGKDYENYDWSRLQQPGKRLDGESVVQRQLWLLNNVPDMTKSTAYDIARREFYRLRLQEDIERRVAAEEAEATGATFGPTRLEIGMELENQEYERWKVWAKSEAQVQEQRAAAFTGAPEIPSTEDSLGLEEGVEEKQPQQA</sequence>
<protein>
    <recommendedName>
        <fullName evidence="3">Small ribosomal subunit protein mS23</fullName>
    </recommendedName>
    <alternativeName>
        <fullName>37S ribosomal protein S25, mitochondrial</fullName>
    </alternativeName>
</protein>
<evidence type="ECO:0000250" key="1"/>
<evidence type="ECO:0000256" key="2">
    <source>
        <dbReference type="SAM" id="MobiDB-lite"/>
    </source>
</evidence>
<evidence type="ECO:0000305" key="3"/>
<keyword id="KW-0496">Mitochondrion</keyword>
<keyword id="KW-1185">Reference proteome</keyword>
<keyword id="KW-0687">Ribonucleoprotein</keyword>
<keyword id="KW-0689">Ribosomal protein</keyword>
<proteinExistence type="inferred from homology"/>
<reference key="1">
    <citation type="journal article" date="2005" name="Nature">
        <title>Genome sequencing and analysis of Aspergillus oryzae.</title>
        <authorList>
            <person name="Machida M."/>
            <person name="Asai K."/>
            <person name="Sano M."/>
            <person name="Tanaka T."/>
            <person name="Kumagai T."/>
            <person name="Terai G."/>
            <person name="Kusumoto K."/>
            <person name="Arima T."/>
            <person name="Akita O."/>
            <person name="Kashiwagi Y."/>
            <person name="Abe K."/>
            <person name="Gomi K."/>
            <person name="Horiuchi H."/>
            <person name="Kitamoto K."/>
            <person name="Kobayashi T."/>
            <person name="Takeuchi M."/>
            <person name="Denning D.W."/>
            <person name="Galagan J.E."/>
            <person name="Nierman W.C."/>
            <person name="Yu J."/>
            <person name="Archer D.B."/>
            <person name="Bennett J.W."/>
            <person name="Bhatnagar D."/>
            <person name="Cleveland T.E."/>
            <person name="Fedorova N.D."/>
            <person name="Gotoh O."/>
            <person name="Horikawa H."/>
            <person name="Hosoyama A."/>
            <person name="Ichinomiya M."/>
            <person name="Igarashi R."/>
            <person name="Iwashita K."/>
            <person name="Juvvadi P.R."/>
            <person name="Kato M."/>
            <person name="Kato Y."/>
            <person name="Kin T."/>
            <person name="Kokubun A."/>
            <person name="Maeda H."/>
            <person name="Maeyama N."/>
            <person name="Maruyama J."/>
            <person name="Nagasaki H."/>
            <person name="Nakajima T."/>
            <person name="Oda K."/>
            <person name="Okada K."/>
            <person name="Paulsen I."/>
            <person name="Sakamoto K."/>
            <person name="Sawano T."/>
            <person name="Takahashi M."/>
            <person name="Takase K."/>
            <person name="Terabayashi Y."/>
            <person name="Wortman J.R."/>
            <person name="Yamada O."/>
            <person name="Yamagata Y."/>
            <person name="Anazawa H."/>
            <person name="Hata Y."/>
            <person name="Koide Y."/>
            <person name="Komori T."/>
            <person name="Koyama Y."/>
            <person name="Minetoki T."/>
            <person name="Suharnan S."/>
            <person name="Tanaka A."/>
            <person name="Isono K."/>
            <person name="Kuhara S."/>
            <person name="Ogasawara N."/>
            <person name="Kikuchi H."/>
        </authorList>
    </citation>
    <scope>NUCLEOTIDE SEQUENCE [LARGE SCALE GENOMIC DNA]</scope>
    <source>
        <strain>ATCC 42149 / RIB 40</strain>
    </source>
</reference>